<comment type="function">
    <text evidence="1">Catalyzes the aldol cleavage of 4-hydroxy-4-methyl-2-oxoglutarate (HMG) into 2 molecules of pyruvate. Also contains a secondary oxaloacetate (OAA) decarboxylase activity due to the common pyruvate enolate transition state formed following C-C bond cleavage in the retro-aldol and decarboxylation reactions (By similarity).</text>
</comment>
<comment type="catalytic activity">
    <reaction>
        <text>4-hydroxy-4-methyl-2-oxoglutarate = 2 pyruvate</text>
        <dbReference type="Rhea" id="RHEA:22748"/>
        <dbReference type="ChEBI" id="CHEBI:15361"/>
        <dbReference type="ChEBI" id="CHEBI:58276"/>
        <dbReference type="EC" id="4.1.3.17"/>
    </reaction>
</comment>
<comment type="catalytic activity">
    <reaction>
        <text>oxaloacetate + H(+) = pyruvate + CO2</text>
        <dbReference type="Rhea" id="RHEA:15641"/>
        <dbReference type="ChEBI" id="CHEBI:15361"/>
        <dbReference type="ChEBI" id="CHEBI:15378"/>
        <dbReference type="ChEBI" id="CHEBI:16452"/>
        <dbReference type="ChEBI" id="CHEBI:16526"/>
        <dbReference type="EC" id="4.1.1.112"/>
    </reaction>
</comment>
<comment type="cofactor">
    <cofactor evidence="1">
        <name>a divalent metal cation</name>
        <dbReference type="ChEBI" id="CHEBI:60240"/>
    </cofactor>
    <text evidence="1">Divalent metal cation.</text>
</comment>
<comment type="subunit">
    <text evidence="1">Homotrimer.</text>
</comment>
<comment type="miscellaneous">
    <text>Was identified as a high-confidence drug target.</text>
</comment>
<comment type="similarity">
    <text evidence="2">Belongs to the class II aldolase/RraA-like family.</text>
</comment>
<comment type="caution">
    <text evidence="3">Originally described as a SAM-dependent methyltransferase (PubMed:9634230), the crystal structure does not resemble other known SAM-dependent methyltransferases. The structure does resemble the phosphohistidine domain of several phosphotransfer system proteins. The protein does not bind S-adenosylmethionine cofactor or potential methyltransferase substrate molecules.</text>
</comment>
<feature type="chain" id="PRO_0000209623" description="Putative 4-hydroxy-4-methyl-2-oxoglutarate aldolase">
    <location>
        <begin position="1"/>
        <end position="157"/>
    </location>
</feature>
<feature type="binding site" evidence="1">
    <location>
        <begin position="78"/>
        <end position="81"/>
    </location>
    <ligand>
        <name>substrate</name>
    </ligand>
</feature>
<feature type="binding site" evidence="1">
    <location>
        <position position="100"/>
    </location>
    <ligand>
        <name>substrate</name>
    </ligand>
</feature>
<feature type="binding site" evidence="1">
    <location>
        <position position="101"/>
    </location>
    <ligand>
        <name>a divalent metal cation</name>
        <dbReference type="ChEBI" id="CHEBI:60240"/>
    </ligand>
</feature>
<feature type="helix" evidence="4">
    <location>
        <begin position="8"/>
        <end position="15"/>
    </location>
</feature>
<feature type="strand" evidence="4">
    <location>
        <begin position="30"/>
        <end position="33"/>
    </location>
</feature>
<feature type="strand" evidence="4">
    <location>
        <begin position="35"/>
        <end position="43"/>
    </location>
</feature>
<feature type="strand" evidence="4">
    <location>
        <begin position="45"/>
        <end position="47"/>
    </location>
</feature>
<feature type="helix" evidence="4">
    <location>
        <begin position="49"/>
        <end position="56"/>
    </location>
</feature>
<feature type="strand" evidence="4">
    <location>
        <begin position="63"/>
        <end position="67"/>
    </location>
</feature>
<feature type="strand" evidence="4">
    <location>
        <begin position="73"/>
        <end position="77"/>
    </location>
</feature>
<feature type="helix" evidence="4">
    <location>
        <begin position="79"/>
        <end position="87"/>
    </location>
</feature>
<feature type="strand" evidence="4">
    <location>
        <begin position="92"/>
        <end position="100"/>
    </location>
</feature>
<feature type="helix" evidence="4">
    <location>
        <begin position="102"/>
        <end position="105"/>
    </location>
</feature>
<feature type="strand" evidence="4">
    <location>
        <begin position="108"/>
        <end position="117"/>
    </location>
</feature>
<feature type="strand" evidence="4">
    <location>
        <begin position="128"/>
        <end position="131"/>
    </location>
</feature>
<feature type="strand" evidence="4">
    <location>
        <begin position="134"/>
        <end position="136"/>
    </location>
</feature>
<feature type="strand" evidence="4">
    <location>
        <begin position="139"/>
        <end position="141"/>
    </location>
</feature>
<feature type="strand" evidence="4">
    <location>
        <begin position="145"/>
        <end position="149"/>
    </location>
</feature>
<feature type="strand" evidence="4">
    <location>
        <begin position="154"/>
        <end position="157"/>
    </location>
</feature>
<keyword id="KW-0002">3D-structure</keyword>
<keyword id="KW-0456">Lyase</keyword>
<keyword id="KW-0479">Metal-binding</keyword>
<keyword id="KW-1185">Reference proteome</keyword>
<name>RRAAH_MYCTU</name>
<evidence type="ECO:0000250" key="1"/>
<evidence type="ECO:0000305" key="2"/>
<evidence type="ECO:0000305" key="3">
    <source>
    </source>
</evidence>
<evidence type="ECO:0007829" key="4">
    <source>
        <dbReference type="PDB" id="1NXJ"/>
    </source>
</evidence>
<reference key="1">
    <citation type="journal article" date="1998" name="Nature">
        <title>Deciphering the biology of Mycobacterium tuberculosis from the complete genome sequence.</title>
        <authorList>
            <person name="Cole S.T."/>
            <person name="Brosch R."/>
            <person name="Parkhill J."/>
            <person name="Garnier T."/>
            <person name="Churcher C.M."/>
            <person name="Harris D.E."/>
            <person name="Gordon S.V."/>
            <person name="Eiglmeier K."/>
            <person name="Gas S."/>
            <person name="Barry C.E. III"/>
            <person name="Tekaia F."/>
            <person name="Badcock K."/>
            <person name="Basham D."/>
            <person name="Brown D."/>
            <person name="Chillingworth T."/>
            <person name="Connor R."/>
            <person name="Davies R.M."/>
            <person name="Devlin K."/>
            <person name="Feltwell T."/>
            <person name="Gentles S."/>
            <person name="Hamlin N."/>
            <person name="Holroyd S."/>
            <person name="Hornsby T."/>
            <person name="Jagels K."/>
            <person name="Krogh A."/>
            <person name="McLean J."/>
            <person name="Moule S."/>
            <person name="Murphy L.D."/>
            <person name="Oliver S."/>
            <person name="Osborne J."/>
            <person name="Quail M.A."/>
            <person name="Rajandream M.A."/>
            <person name="Rogers J."/>
            <person name="Rutter S."/>
            <person name="Seeger K."/>
            <person name="Skelton S."/>
            <person name="Squares S."/>
            <person name="Squares R."/>
            <person name="Sulston J.E."/>
            <person name="Taylor K."/>
            <person name="Whitehead S."/>
            <person name="Barrell B.G."/>
        </authorList>
    </citation>
    <scope>NUCLEOTIDE SEQUENCE [LARGE SCALE GENOMIC DNA]</scope>
    <source>
        <strain>ATCC 25618 / H37Rv</strain>
    </source>
</reference>
<reference key="2">
    <citation type="journal article" date="2008" name="BMC Syst. Biol.">
        <title>targetTB: a target identification pipeline for Mycobacterium tuberculosis through an interactome, reactome and genome-scale structural analysis.</title>
        <authorList>
            <person name="Raman K."/>
            <person name="Yeturu K."/>
            <person name="Chandra N."/>
        </authorList>
    </citation>
    <scope>IDENTIFICATION AS A DRUG TARGET [LARGE SCALE ANALYSIS]</scope>
</reference>
<reference key="3">
    <citation type="journal article" date="2011" name="Mol. Cell. Proteomics">
        <title>Proteogenomic analysis of Mycobacterium tuberculosis by high resolution mass spectrometry.</title>
        <authorList>
            <person name="Kelkar D.S."/>
            <person name="Kumar D."/>
            <person name="Kumar P."/>
            <person name="Balakrishnan L."/>
            <person name="Muthusamy B."/>
            <person name="Yadav A.K."/>
            <person name="Shrivastava P."/>
            <person name="Marimuthu A."/>
            <person name="Anand S."/>
            <person name="Sundaram H."/>
            <person name="Kingsbury R."/>
            <person name="Harsha H.C."/>
            <person name="Nair B."/>
            <person name="Prasad T.S."/>
            <person name="Chauhan D.S."/>
            <person name="Katoch K."/>
            <person name="Katoch V.M."/>
            <person name="Kumar P."/>
            <person name="Chaerkady R."/>
            <person name="Ramachandran S."/>
            <person name="Dash D."/>
            <person name="Pandey A."/>
        </authorList>
    </citation>
    <scope>IDENTIFICATION BY MASS SPECTROMETRY [LARGE SCALE ANALYSIS]</scope>
    <source>
        <strain>ATCC 25618 / H37Rv</strain>
    </source>
</reference>
<reference key="4">
    <citation type="journal article" date="2003" name="J. Bacteriol.">
        <title>Crystal structure of a putative methyltransferase from Mycobacterium tuberculosis: misannotation of a genome clarified by protein structural analysis.</title>
        <authorList>
            <person name="Johnston J.M."/>
            <person name="Arcus V.L."/>
            <person name="Morton C.J."/>
            <person name="Parker M.W."/>
            <person name="Baker E.N."/>
        </authorList>
    </citation>
    <scope>X-RAY CRYSTALLOGRAPHY (1.9 ANGSTROMS)</scope>
</reference>
<sequence>MAISFRPTADLVDDIGPDVRSCDLQFRQFGGRSQFAGPISTVRCFQDNALLKSVLSQPSAGGVLVIDGAGSLHTALVGDVIAELARSTGWTGLIVHGAVRDAAALRGIDIGIKALGTNPRKSTKTGAGERDVEITLGGVTFVPGDIAYSDDDGIIVV</sequence>
<accession>P9WGY3</accession>
<accession>L0TFG1</accession>
<accession>P0A666</accession>
<accession>P96224</accession>
<proteinExistence type="evidence at protein level"/>
<gene>
    <name type="primary">rraA</name>
    <name type="ordered locus">Rv3853</name>
    <name type="ORF">MTCY01A6.15c</name>
</gene>
<dbReference type="EC" id="4.1.3.17"/>
<dbReference type="EC" id="4.1.1.112"/>
<dbReference type="EMBL" id="AL123456">
    <property type="protein sequence ID" value="CCP46682.1"/>
    <property type="molecule type" value="Genomic_DNA"/>
</dbReference>
<dbReference type="PIR" id="B70655">
    <property type="entry name" value="B70655"/>
</dbReference>
<dbReference type="RefSeq" id="NP_218370.1">
    <property type="nucleotide sequence ID" value="NC_000962.3"/>
</dbReference>
<dbReference type="RefSeq" id="WP_003399786.1">
    <property type="nucleotide sequence ID" value="NZ_NVQJ01000057.1"/>
</dbReference>
<dbReference type="PDB" id="1NXJ">
    <property type="method" value="X-ray"/>
    <property type="resolution" value="1.90 A"/>
    <property type="chains" value="A/B/C=2-157"/>
</dbReference>
<dbReference type="PDBsum" id="1NXJ"/>
<dbReference type="SMR" id="P9WGY3"/>
<dbReference type="FunCoup" id="P9WGY3">
    <property type="interactions" value="7"/>
</dbReference>
<dbReference type="STRING" id="83332.Rv3853"/>
<dbReference type="DrugBank" id="DB04343">
    <property type="generic name" value="Glyoxylic acid"/>
</dbReference>
<dbReference type="PaxDb" id="83332-Rv3853"/>
<dbReference type="GeneID" id="45427857"/>
<dbReference type="GeneID" id="886181"/>
<dbReference type="KEGG" id="mtu:Rv3853"/>
<dbReference type="KEGG" id="mtv:RVBD_3853"/>
<dbReference type="TubercuList" id="Rv3853"/>
<dbReference type="eggNOG" id="COG0684">
    <property type="taxonomic scope" value="Bacteria"/>
</dbReference>
<dbReference type="InParanoid" id="P9WGY3"/>
<dbReference type="OrthoDB" id="943692at2"/>
<dbReference type="PhylomeDB" id="P9WGY3"/>
<dbReference type="EvolutionaryTrace" id="P9WGY3"/>
<dbReference type="Proteomes" id="UP000001584">
    <property type="component" value="Chromosome"/>
</dbReference>
<dbReference type="GO" id="GO:0047443">
    <property type="term" value="F:4-hydroxy-4-methyl-2-oxoglutarate aldolase activity"/>
    <property type="evidence" value="ECO:0007669"/>
    <property type="project" value="UniProtKB-EC"/>
</dbReference>
<dbReference type="GO" id="GO:0046872">
    <property type="term" value="F:metal ion binding"/>
    <property type="evidence" value="ECO:0007669"/>
    <property type="project" value="UniProtKB-KW"/>
</dbReference>
<dbReference type="GO" id="GO:0008948">
    <property type="term" value="F:oxaloacetate decarboxylase activity"/>
    <property type="evidence" value="ECO:0007669"/>
    <property type="project" value="UniProtKB-EC"/>
</dbReference>
<dbReference type="GO" id="GO:0008428">
    <property type="term" value="F:ribonuclease inhibitor activity"/>
    <property type="evidence" value="ECO:0007669"/>
    <property type="project" value="InterPro"/>
</dbReference>
<dbReference type="GO" id="GO:0051252">
    <property type="term" value="P:regulation of RNA metabolic process"/>
    <property type="evidence" value="ECO:0007669"/>
    <property type="project" value="InterPro"/>
</dbReference>
<dbReference type="CDD" id="cd16841">
    <property type="entry name" value="RraA_family"/>
    <property type="match status" value="1"/>
</dbReference>
<dbReference type="Gene3D" id="3.50.30.40">
    <property type="entry name" value="Ribonuclease E inhibitor RraA/RraA-like"/>
    <property type="match status" value="1"/>
</dbReference>
<dbReference type="InterPro" id="IPR010203">
    <property type="entry name" value="RraA"/>
</dbReference>
<dbReference type="InterPro" id="IPR005493">
    <property type="entry name" value="RraA/RraA-like"/>
</dbReference>
<dbReference type="InterPro" id="IPR036704">
    <property type="entry name" value="RraA/RraA-like_sf"/>
</dbReference>
<dbReference type="NCBIfam" id="TIGR01935">
    <property type="entry name" value="NOT-MenG"/>
    <property type="match status" value="1"/>
</dbReference>
<dbReference type="NCBIfam" id="NF006875">
    <property type="entry name" value="PRK09372.1"/>
    <property type="match status" value="1"/>
</dbReference>
<dbReference type="PANTHER" id="PTHR33254">
    <property type="entry name" value="4-HYDROXY-4-METHYL-2-OXOGLUTARATE ALDOLASE 3-RELATED"/>
    <property type="match status" value="1"/>
</dbReference>
<dbReference type="PANTHER" id="PTHR33254:SF4">
    <property type="entry name" value="4-HYDROXY-4-METHYL-2-OXOGLUTARATE ALDOLASE 3-RELATED"/>
    <property type="match status" value="1"/>
</dbReference>
<dbReference type="Pfam" id="PF03737">
    <property type="entry name" value="RraA-like"/>
    <property type="match status" value="1"/>
</dbReference>
<dbReference type="SUPFAM" id="SSF89562">
    <property type="entry name" value="RraA-like"/>
    <property type="match status" value="1"/>
</dbReference>
<organism>
    <name type="scientific">Mycobacterium tuberculosis (strain ATCC 25618 / H37Rv)</name>
    <dbReference type="NCBI Taxonomy" id="83332"/>
    <lineage>
        <taxon>Bacteria</taxon>
        <taxon>Bacillati</taxon>
        <taxon>Actinomycetota</taxon>
        <taxon>Actinomycetes</taxon>
        <taxon>Mycobacteriales</taxon>
        <taxon>Mycobacteriaceae</taxon>
        <taxon>Mycobacterium</taxon>
        <taxon>Mycobacterium tuberculosis complex</taxon>
    </lineage>
</organism>
<protein>
    <recommendedName>
        <fullName>Putative 4-hydroxy-4-methyl-2-oxoglutarate aldolase</fullName>
        <shortName>HMG aldolase</shortName>
        <ecNumber>4.1.3.17</ecNumber>
    </recommendedName>
    <alternativeName>
        <fullName>Oxaloacetate decarboxylase</fullName>
        <shortName>OAA decarboxylase</shortName>
        <ecNumber>4.1.1.112</ecNumber>
    </alternativeName>
    <alternativeName>
        <fullName>Regulator of ribonuclease activity homolog</fullName>
    </alternativeName>
    <alternativeName>
        <fullName>RraA-like protein</fullName>
    </alternativeName>
</protein>